<dbReference type="EC" id="2.3.2.27" evidence="14 16"/>
<dbReference type="EMBL" id="L42553">
    <property type="protein sequence ID" value="AAA75573.1"/>
    <property type="molecule type" value="Genomic_DNA"/>
</dbReference>
<dbReference type="EMBL" id="Z48443">
    <property type="protein sequence ID" value="CAA88358.1"/>
    <property type="molecule type" value="Genomic_DNA"/>
</dbReference>
<dbReference type="EMBL" id="X89241">
    <property type="protein sequence ID" value="CAA61529.1"/>
    <property type="molecule type" value="Genomic_DNA"/>
</dbReference>
<dbReference type="EMBL" id="AE014134">
    <property type="protein sequence ID" value="AAF51104.1"/>
    <property type="molecule type" value="Genomic_DNA"/>
</dbReference>
<dbReference type="EMBL" id="AY128426">
    <property type="protein sequence ID" value="AAM75019.1"/>
    <property type="molecule type" value="mRNA"/>
</dbReference>
<dbReference type="PIR" id="S55554">
    <property type="entry name" value="S55554"/>
</dbReference>
<dbReference type="RefSeq" id="NP_523467.1">
    <property type="nucleotide sequence ID" value="NM_078743.5"/>
</dbReference>
<dbReference type="RefSeq" id="NP_722907.1">
    <property type="nucleotide sequence ID" value="NM_164536.2"/>
</dbReference>
<dbReference type="PDB" id="2LUA">
    <property type="method" value="NMR"/>
    <property type="chains" value="A=520-570"/>
</dbReference>
<dbReference type="PDB" id="4RKG">
    <property type="method" value="X-ray"/>
    <property type="resolution" value="2.50 A"/>
    <property type="chains" value="A/B=520-570"/>
</dbReference>
<dbReference type="PDB" id="4RKH">
    <property type="method" value="X-ray"/>
    <property type="resolution" value="2.00 A"/>
    <property type="chains" value="C/D/E/F=520-570"/>
</dbReference>
<dbReference type="PDBsum" id="2LUA"/>
<dbReference type="PDBsum" id="4RKG"/>
<dbReference type="PDBsum" id="4RKH"/>
<dbReference type="BMRB" id="P50534"/>
<dbReference type="SMR" id="P50534"/>
<dbReference type="BioGRID" id="59776">
    <property type="interactions" value="29"/>
</dbReference>
<dbReference type="ComplexPortal" id="CPX-2340">
    <property type="entry name" value="Male specific lethal complex"/>
</dbReference>
<dbReference type="FunCoup" id="P50534">
    <property type="interactions" value="8"/>
</dbReference>
<dbReference type="IntAct" id="P50534">
    <property type="interactions" value="2"/>
</dbReference>
<dbReference type="STRING" id="7227.FBpp0077260"/>
<dbReference type="PaxDb" id="7227-FBpp0077259"/>
<dbReference type="DNASU" id="33565"/>
<dbReference type="EnsemblMetazoa" id="FBtr0077570">
    <property type="protein sequence ID" value="FBpp0077259"/>
    <property type="gene ID" value="FBgn0005616"/>
</dbReference>
<dbReference type="EnsemblMetazoa" id="FBtr0077571">
    <property type="protein sequence ID" value="FBpp0077260"/>
    <property type="gene ID" value="FBgn0005616"/>
</dbReference>
<dbReference type="GeneID" id="33565"/>
<dbReference type="KEGG" id="dme:Dmel_CG3241"/>
<dbReference type="AGR" id="FB:FBgn0005616"/>
<dbReference type="CTD" id="33565"/>
<dbReference type="FlyBase" id="FBgn0005616">
    <property type="gene designation" value="msl-2"/>
</dbReference>
<dbReference type="VEuPathDB" id="VectorBase:FBgn0005616"/>
<dbReference type="eggNOG" id="ENOG502QPJR">
    <property type="taxonomic scope" value="Eukaryota"/>
</dbReference>
<dbReference type="GeneTree" id="ENSGT00390000016814"/>
<dbReference type="HOGENOM" id="CLU_009669_0_0_1"/>
<dbReference type="InParanoid" id="P50534"/>
<dbReference type="OMA" id="TEVCDSN"/>
<dbReference type="OrthoDB" id="6412801at2759"/>
<dbReference type="PhylomeDB" id="P50534"/>
<dbReference type="Reactome" id="R-DME-3214847">
    <property type="pathway name" value="HATs acetylate histones"/>
</dbReference>
<dbReference type="UniPathway" id="UPA00143"/>
<dbReference type="BioGRID-ORCS" id="33565">
    <property type="hits" value="0 hits in 1 CRISPR screen"/>
</dbReference>
<dbReference type="EvolutionaryTrace" id="P50534"/>
<dbReference type="GenomeRNAi" id="33565"/>
<dbReference type="PRO" id="PR:P50534"/>
<dbReference type="Proteomes" id="UP000000803">
    <property type="component" value="Chromosome 2L"/>
</dbReference>
<dbReference type="Bgee" id="FBgn0005616">
    <property type="expression patterns" value="Expressed in outer photoreceptor cell (Drosophila) in insect head and 115 other cell types or tissues"/>
</dbReference>
<dbReference type="ExpressionAtlas" id="P50534">
    <property type="expression patterns" value="baseline and differential"/>
</dbReference>
<dbReference type="GO" id="GO:0005694">
    <property type="term" value="C:chromosome"/>
    <property type="evidence" value="ECO:0000315"/>
    <property type="project" value="FlyBase"/>
</dbReference>
<dbReference type="GO" id="GO:0046536">
    <property type="term" value="C:dosage compensation complex"/>
    <property type="evidence" value="ECO:0000314"/>
    <property type="project" value="FlyBase"/>
</dbReference>
<dbReference type="GO" id="GO:0072487">
    <property type="term" value="C:MSL complex"/>
    <property type="evidence" value="ECO:0000314"/>
    <property type="project" value="UniProtKB"/>
</dbReference>
<dbReference type="GO" id="GO:0000228">
    <property type="term" value="C:nuclear chromosome"/>
    <property type="evidence" value="ECO:0000314"/>
    <property type="project" value="FlyBase"/>
</dbReference>
<dbReference type="GO" id="GO:0000805">
    <property type="term" value="C:X chromosome"/>
    <property type="evidence" value="ECO:0000314"/>
    <property type="project" value="UniProtKB"/>
</dbReference>
<dbReference type="GO" id="GO:0016456">
    <property type="term" value="C:X chromosome located dosage compensation complex, transcription activating"/>
    <property type="evidence" value="ECO:0000314"/>
    <property type="project" value="UniProtKB"/>
</dbReference>
<dbReference type="GO" id="GO:0003682">
    <property type="term" value="F:chromatin binding"/>
    <property type="evidence" value="ECO:0000314"/>
    <property type="project" value="FlyBase"/>
</dbReference>
<dbReference type="GO" id="GO:0140463">
    <property type="term" value="F:chromatin-protein adaptor activity"/>
    <property type="evidence" value="ECO:0000314"/>
    <property type="project" value="UniProtKB"/>
</dbReference>
<dbReference type="GO" id="GO:0003677">
    <property type="term" value="F:DNA binding"/>
    <property type="evidence" value="ECO:0000314"/>
    <property type="project" value="UniProtKB"/>
</dbReference>
<dbReference type="GO" id="GO:0141054">
    <property type="term" value="F:histone H2B ubiquitin ligase activity"/>
    <property type="evidence" value="ECO:0000314"/>
    <property type="project" value="UniProtKB"/>
</dbReference>
<dbReference type="GO" id="GO:0106222">
    <property type="term" value="F:lncRNA binding"/>
    <property type="evidence" value="ECO:0000314"/>
    <property type="project" value="UniProtKB"/>
</dbReference>
<dbReference type="GO" id="GO:0140693">
    <property type="term" value="F:molecular condensate scaffold activity"/>
    <property type="evidence" value="ECO:0000314"/>
    <property type="project" value="UniProtKB"/>
</dbReference>
<dbReference type="GO" id="GO:0140517">
    <property type="term" value="F:protein-RNA adaptor activity"/>
    <property type="evidence" value="ECO:0000314"/>
    <property type="project" value="UniProtKB"/>
</dbReference>
<dbReference type="GO" id="GO:1990837">
    <property type="term" value="F:sequence-specific double-stranded DNA binding"/>
    <property type="evidence" value="ECO:0000314"/>
    <property type="project" value="FlyBase"/>
</dbReference>
<dbReference type="GO" id="GO:0061630">
    <property type="term" value="F:ubiquitin protein ligase activity"/>
    <property type="evidence" value="ECO:0000314"/>
    <property type="project" value="UniProtKB"/>
</dbReference>
<dbReference type="GO" id="GO:0008270">
    <property type="term" value="F:zinc ion binding"/>
    <property type="evidence" value="ECO:0007669"/>
    <property type="project" value="UniProtKB-KW"/>
</dbReference>
<dbReference type="GO" id="GO:0009047">
    <property type="term" value="P:dosage compensation by hyperactivation of X chromosome"/>
    <property type="evidence" value="ECO:0000314"/>
    <property type="project" value="UniProtKB"/>
</dbReference>
<dbReference type="GO" id="GO:0071168">
    <property type="term" value="P:protein localization to chromatin"/>
    <property type="evidence" value="ECO:0000314"/>
    <property type="project" value="UniProtKB"/>
</dbReference>
<dbReference type="GO" id="GO:0000209">
    <property type="term" value="P:protein polyubiquitination"/>
    <property type="evidence" value="ECO:0000314"/>
    <property type="project" value="FlyBase"/>
</dbReference>
<dbReference type="GO" id="GO:0016567">
    <property type="term" value="P:protein ubiquitination"/>
    <property type="evidence" value="ECO:0000314"/>
    <property type="project" value="FlyBase"/>
</dbReference>
<dbReference type="GO" id="GO:0007549">
    <property type="term" value="P:sex-chromosome dosage compensation"/>
    <property type="evidence" value="ECO:0000315"/>
    <property type="project" value="FlyBase"/>
</dbReference>
<dbReference type="CDD" id="cd13122">
    <property type="entry name" value="MSL2_CXC"/>
    <property type="match status" value="1"/>
</dbReference>
<dbReference type="CDD" id="cd16522">
    <property type="entry name" value="RING-HC_MSL2"/>
    <property type="match status" value="1"/>
</dbReference>
<dbReference type="Gene3D" id="3.30.40.10">
    <property type="entry name" value="Zinc/RING finger domain, C3HC4 (zinc finger)"/>
    <property type="match status" value="1"/>
</dbReference>
<dbReference type="InterPro" id="IPR037922">
    <property type="entry name" value="MSL2"/>
</dbReference>
<dbReference type="InterPro" id="IPR032049">
    <property type="entry name" value="Msl2-CXC"/>
</dbReference>
<dbReference type="InterPro" id="IPR032043">
    <property type="entry name" value="Msl2_Znf-RING"/>
</dbReference>
<dbReference type="InterPro" id="IPR033467">
    <property type="entry name" value="Tesmin/TSO1-like_CXC"/>
</dbReference>
<dbReference type="InterPro" id="IPR001841">
    <property type="entry name" value="Znf_RING"/>
</dbReference>
<dbReference type="InterPro" id="IPR013083">
    <property type="entry name" value="Znf_RING/FYVE/PHD"/>
</dbReference>
<dbReference type="InterPro" id="IPR017907">
    <property type="entry name" value="Znf_RING_CS"/>
</dbReference>
<dbReference type="PANTHER" id="PTHR16048:SF3">
    <property type="entry name" value="E3 UBIQUITIN-PROTEIN LIGASE MSL2"/>
    <property type="match status" value="1"/>
</dbReference>
<dbReference type="PANTHER" id="PTHR16048">
    <property type="entry name" value="MSL2-RELATED"/>
    <property type="match status" value="1"/>
</dbReference>
<dbReference type="Pfam" id="PF16682">
    <property type="entry name" value="MSL2-CXC"/>
    <property type="match status" value="1"/>
</dbReference>
<dbReference type="Pfam" id="PF16685">
    <property type="entry name" value="zf-RING_10"/>
    <property type="match status" value="1"/>
</dbReference>
<dbReference type="SMART" id="SM01114">
    <property type="entry name" value="CXC"/>
    <property type="match status" value="1"/>
</dbReference>
<dbReference type="SUPFAM" id="SSF57850">
    <property type="entry name" value="RING/U-box"/>
    <property type="match status" value="1"/>
</dbReference>
<dbReference type="PROSITE" id="PS52051">
    <property type="entry name" value="CXC_MSL2"/>
    <property type="match status" value="1"/>
</dbReference>
<dbReference type="PROSITE" id="PS00518">
    <property type="entry name" value="ZF_RING_1"/>
    <property type="match status" value="1"/>
</dbReference>
<dbReference type="PROSITE" id="PS50089">
    <property type="entry name" value="ZF_RING_2"/>
    <property type="match status" value="1"/>
</dbReference>
<organism>
    <name type="scientific">Drosophila melanogaster</name>
    <name type="common">Fruit fly</name>
    <dbReference type="NCBI Taxonomy" id="7227"/>
    <lineage>
        <taxon>Eukaryota</taxon>
        <taxon>Metazoa</taxon>
        <taxon>Ecdysozoa</taxon>
        <taxon>Arthropoda</taxon>
        <taxon>Hexapoda</taxon>
        <taxon>Insecta</taxon>
        <taxon>Pterygota</taxon>
        <taxon>Neoptera</taxon>
        <taxon>Endopterygota</taxon>
        <taxon>Diptera</taxon>
        <taxon>Brachycera</taxon>
        <taxon>Muscomorpha</taxon>
        <taxon>Ephydroidea</taxon>
        <taxon>Drosophilidae</taxon>
        <taxon>Drosophila</taxon>
        <taxon>Sophophora</taxon>
    </lineage>
</organism>
<reference key="1">
    <citation type="journal article" date="1995" name="Cell">
        <title>Expression of msl-2 causes assembly of dosage compensation regulators on the X chromosomes and female lethality in Drosophila.</title>
        <authorList>
            <person name="Kelley R.L."/>
            <person name="Solovyeva I."/>
            <person name="Lyman L.M."/>
            <person name="Richman R."/>
            <person name="Solovyev V."/>
            <person name="Kuroda M.I."/>
        </authorList>
    </citation>
    <scope>NUCLEOTIDE SEQUENCE [GENOMIC DNA]</scope>
    <scope>FUNCTION</scope>
    <scope>INTERACTION WITH MSL-1</scope>
    <scope>SUBCELLULAR LOCATION</scope>
    <scope>DEVELOPMENTAL STAGE</scope>
</reference>
<reference key="2">
    <citation type="journal article" date="1995" name="EMBO J.">
        <title>Male-specific lethal 2, a dosage compensation gene of Drosophila, undergoes sex-specific regulation and encodes a protein with a RING finger and a metallothionein-like cysteine cluster.</title>
        <authorList>
            <person name="Zhou S."/>
            <person name="Yang Y."/>
            <person name="Scott M.J."/>
            <person name="Pannuti A."/>
            <person name="Fehr K.C."/>
            <person name="Eisen A."/>
            <person name="Koonin E.V."/>
            <person name="Fouts D.L."/>
            <person name="Wrightsman R."/>
            <person name="Manning J.E."/>
            <person name="Lucchesi J.C."/>
        </authorList>
    </citation>
    <scope>NUCLEOTIDE SEQUENCE [GENOMIC DNA]</scope>
    <scope>FUNCTION</scope>
    <scope>INTERACTION WITH MSL-1</scope>
    <scope>SUBCELLULAR LOCATION</scope>
</reference>
<reference key="3">
    <citation type="journal article" date="1995" name="Development">
        <title>The msl-2 dosage compensation gene of Drosophila encodes a putative DNA-binding protein whose expression is sex specifically regulated by Sex-lethal.</title>
        <authorList>
            <person name="Bashaw G.J."/>
            <person name="Baker B.S."/>
        </authorList>
    </citation>
    <scope>NUCLEOTIDE SEQUENCE [GENOMIC DNA]</scope>
    <scope>FUNCTION</scope>
    <scope>INTERACTION WITH MSL-1</scope>
    <scope>SUBCELLULAR LOCATION</scope>
</reference>
<reference key="4">
    <citation type="journal article" date="2000" name="Science">
        <title>The genome sequence of Drosophila melanogaster.</title>
        <authorList>
            <person name="Adams M.D."/>
            <person name="Celniker S.E."/>
            <person name="Holt R.A."/>
            <person name="Evans C.A."/>
            <person name="Gocayne J.D."/>
            <person name="Amanatides P.G."/>
            <person name="Scherer S.E."/>
            <person name="Li P.W."/>
            <person name="Hoskins R.A."/>
            <person name="Galle R.F."/>
            <person name="George R.A."/>
            <person name="Lewis S.E."/>
            <person name="Richards S."/>
            <person name="Ashburner M."/>
            <person name="Henderson S.N."/>
            <person name="Sutton G.G."/>
            <person name="Wortman J.R."/>
            <person name="Yandell M.D."/>
            <person name="Zhang Q."/>
            <person name="Chen L.X."/>
            <person name="Brandon R.C."/>
            <person name="Rogers Y.-H.C."/>
            <person name="Blazej R.G."/>
            <person name="Champe M."/>
            <person name="Pfeiffer B.D."/>
            <person name="Wan K.H."/>
            <person name="Doyle C."/>
            <person name="Baxter E.G."/>
            <person name="Helt G."/>
            <person name="Nelson C.R."/>
            <person name="Miklos G.L.G."/>
            <person name="Abril J.F."/>
            <person name="Agbayani A."/>
            <person name="An H.-J."/>
            <person name="Andrews-Pfannkoch C."/>
            <person name="Baldwin D."/>
            <person name="Ballew R.M."/>
            <person name="Basu A."/>
            <person name="Baxendale J."/>
            <person name="Bayraktaroglu L."/>
            <person name="Beasley E.M."/>
            <person name="Beeson K.Y."/>
            <person name="Benos P.V."/>
            <person name="Berman B.P."/>
            <person name="Bhandari D."/>
            <person name="Bolshakov S."/>
            <person name="Borkova D."/>
            <person name="Botchan M.R."/>
            <person name="Bouck J."/>
            <person name="Brokstein P."/>
            <person name="Brottier P."/>
            <person name="Burtis K.C."/>
            <person name="Busam D.A."/>
            <person name="Butler H."/>
            <person name="Cadieu E."/>
            <person name="Center A."/>
            <person name="Chandra I."/>
            <person name="Cherry J.M."/>
            <person name="Cawley S."/>
            <person name="Dahlke C."/>
            <person name="Davenport L.B."/>
            <person name="Davies P."/>
            <person name="de Pablos B."/>
            <person name="Delcher A."/>
            <person name="Deng Z."/>
            <person name="Mays A.D."/>
            <person name="Dew I."/>
            <person name="Dietz S.M."/>
            <person name="Dodson K."/>
            <person name="Doup L.E."/>
            <person name="Downes M."/>
            <person name="Dugan-Rocha S."/>
            <person name="Dunkov B.C."/>
            <person name="Dunn P."/>
            <person name="Durbin K.J."/>
            <person name="Evangelista C.C."/>
            <person name="Ferraz C."/>
            <person name="Ferriera S."/>
            <person name="Fleischmann W."/>
            <person name="Fosler C."/>
            <person name="Gabrielian A.E."/>
            <person name="Garg N.S."/>
            <person name="Gelbart W.M."/>
            <person name="Glasser K."/>
            <person name="Glodek A."/>
            <person name="Gong F."/>
            <person name="Gorrell J.H."/>
            <person name="Gu Z."/>
            <person name="Guan P."/>
            <person name="Harris M."/>
            <person name="Harris N.L."/>
            <person name="Harvey D.A."/>
            <person name="Heiman T.J."/>
            <person name="Hernandez J.R."/>
            <person name="Houck J."/>
            <person name="Hostin D."/>
            <person name="Houston K.A."/>
            <person name="Howland T.J."/>
            <person name="Wei M.-H."/>
            <person name="Ibegwam C."/>
            <person name="Jalali M."/>
            <person name="Kalush F."/>
            <person name="Karpen G.H."/>
            <person name="Ke Z."/>
            <person name="Kennison J.A."/>
            <person name="Ketchum K.A."/>
            <person name="Kimmel B.E."/>
            <person name="Kodira C.D."/>
            <person name="Kraft C.L."/>
            <person name="Kravitz S."/>
            <person name="Kulp D."/>
            <person name="Lai Z."/>
            <person name="Lasko P."/>
            <person name="Lei Y."/>
            <person name="Levitsky A.A."/>
            <person name="Li J.H."/>
            <person name="Li Z."/>
            <person name="Liang Y."/>
            <person name="Lin X."/>
            <person name="Liu X."/>
            <person name="Mattei B."/>
            <person name="McIntosh T.C."/>
            <person name="McLeod M.P."/>
            <person name="McPherson D."/>
            <person name="Merkulov G."/>
            <person name="Milshina N.V."/>
            <person name="Mobarry C."/>
            <person name="Morris J."/>
            <person name="Moshrefi A."/>
            <person name="Mount S.M."/>
            <person name="Moy M."/>
            <person name="Murphy B."/>
            <person name="Murphy L."/>
            <person name="Muzny D.M."/>
            <person name="Nelson D.L."/>
            <person name="Nelson D.R."/>
            <person name="Nelson K.A."/>
            <person name="Nixon K."/>
            <person name="Nusskern D.R."/>
            <person name="Pacleb J.M."/>
            <person name="Palazzolo M."/>
            <person name="Pittman G.S."/>
            <person name="Pan S."/>
            <person name="Pollard J."/>
            <person name="Puri V."/>
            <person name="Reese M.G."/>
            <person name="Reinert K."/>
            <person name="Remington K."/>
            <person name="Saunders R.D.C."/>
            <person name="Scheeler F."/>
            <person name="Shen H."/>
            <person name="Shue B.C."/>
            <person name="Siden-Kiamos I."/>
            <person name="Simpson M."/>
            <person name="Skupski M.P."/>
            <person name="Smith T.J."/>
            <person name="Spier E."/>
            <person name="Spradling A.C."/>
            <person name="Stapleton M."/>
            <person name="Strong R."/>
            <person name="Sun E."/>
            <person name="Svirskas R."/>
            <person name="Tector C."/>
            <person name="Turner R."/>
            <person name="Venter E."/>
            <person name="Wang A.H."/>
            <person name="Wang X."/>
            <person name="Wang Z.-Y."/>
            <person name="Wassarman D.A."/>
            <person name="Weinstock G.M."/>
            <person name="Weissenbach J."/>
            <person name="Williams S.M."/>
            <person name="Woodage T."/>
            <person name="Worley K.C."/>
            <person name="Wu D."/>
            <person name="Yang S."/>
            <person name="Yao Q.A."/>
            <person name="Ye J."/>
            <person name="Yeh R.-F."/>
            <person name="Zaveri J.S."/>
            <person name="Zhan M."/>
            <person name="Zhang G."/>
            <person name="Zhao Q."/>
            <person name="Zheng L."/>
            <person name="Zheng X.H."/>
            <person name="Zhong F.N."/>
            <person name="Zhong W."/>
            <person name="Zhou X."/>
            <person name="Zhu S.C."/>
            <person name="Zhu X."/>
            <person name="Smith H.O."/>
            <person name="Gibbs R.A."/>
            <person name="Myers E.W."/>
            <person name="Rubin G.M."/>
            <person name="Venter J.C."/>
        </authorList>
    </citation>
    <scope>NUCLEOTIDE SEQUENCE [LARGE SCALE GENOMIC DNA]</scope>
    <source>
        <strain>Berkeley</strain>
    </source>
</reference>
<reference key="5">
    <citation type="journal article" date="2002" name="Genome Biol.">
        <title>Annotation of the Drosophila melanogaster euchromatic genome: a systematic review.</title>
        <authorList>
            <person name="Misra S."/>
            <person name="Crosby M.A."/>
            <person name="Mungall C.J."/>
            <person name="Matthews B.B."/>
            <person name="Campbell K.S."/>
            <person name="Hradecky P."/>
            <person name="Huang Y."/>
            <person name="Kaminker J.S."/>
            <person name="Millburn G.H."/>
            <person name="Prochnik S.E."/>
            <person name="Smith C.D."/>
            <person name="Tupy J.L."/>
            <person name="Whitfield E.J."/>
            <person name="Bayraktaroglu L."/>
            <person name="Berman B.P."/>
            <person name="Bettencourt B.R."/>
            <person name="Celniker S.E."/>
            <person name="de Grey A.D.N.J."/>
            <person name="Drysdale R.A."/>
            <person name="Harris N.L."/>
            <person name="Richter J."/>
            <person name="Russo S."/>
            <person name="Schroeder A.J."/>
            <person name="Shu S.Q."/>
            <person name="Stapleton M."/>
            <person name="Yamada C."/>
            <person name="Ashburner M."/>
            <person name="Gelbart W.M."/>
            <person name="Rubin G.M."/>
            <person name="Lewis S.E."/>
        </authorList>
    </citation>
    <scope>GENOME REANNOTATION</scope>
    <source>
        <strain>Berkeley</strain>
    </source>
</reference>
<reference key="6">
    <citation type="journal article" date="2002" name="Genome Biol.">
        <title>A Drosophila full-length cDNA resource.</title>
        <authorList>
            <person name="Stapleton M."/>
            <person name="Carlson J.W."/>
            <person name="Brokstein P."/>
            <person name="Yu C."/>
            <person name="Champe M."/>
            <person name="George R.A."/>
            <person name="Guarin H."/>
            <person name="Kronmiller B."/>
            <person name="Pacleb J.M."/>
            <person name="Park S."/>
            <person name="Wan K.H."/>
            <person name="Rubin G.M."/>
            <person name="Celniker S.E."/>
        </authorList>
    </citation>
    <scope>NUCLEOTIDE SEQUENCE [LARGE SCALE MRNA]</scope>
    <source>
        <strain>Berkeley</strain>
        <tissue>Head</tissue>
    </source>
</reference>
<reference key="7">
    <citation type="journal article" date="1997" name="Cell">
        <title>The regulation of the Drosophila msl-2 gene reveals a function for Sex-lethal in translational control.</title>
        <authorList>
            <person name="Bashaw G.J."/>
            <person name="Baker B.S."/>
        </authorList>
    </citation>
    <scope>INDUCTION</scope>
</reference>
<reference key="8">
    <citation type="journal article" date="1997" name="Nature">
        <title>Sex lethal controls dosage compensation in Drosophila by a non-splicing mechanism.</title>
        <authorList>
            <person name="Kelley R.L."/>
            <person name="Wang J."/>
            <person name="Bell L."/>
            <person name="Kuroda M.I."/>
        </authorList>
    </citation>
    <scope>INDUCTION</scope>
</reference>
<reference key="9">
    <citation type="journal article" date="1999" name="Nature">
        <title>Inhibition of msl-2 splicing by Sex-lethal reveals interaction between U2AF35 and the 3' splice site AG.</title>
        <authorList>
            <person name="Merendino L."/>
            <person name="Guth S."/>
            <person name="Bilbao D."/>
            <person name="Martinez C."/>
            <person name="Valcarcel J."/>
        </authorList>
    </citation>
    <scope>INDUCTION</scope>
</reference>
<reference key="10">
    <citation type="journal article" date="2000" name="Curr. Biol.">
        <title>Ordered assembly of roX RNAs into MSL complexes on the dosage-compensated X chromosome in Drosophila.</title>
        <authorList>
            <person name="Meller V.H."/>
            <person name="Gordadze P.R."/>
            <person name="Park Y."/>
            <person name="Chu X."/>
            <person name="Stuckenholz C."/>
            <person name="Kelley R.L."/>
            <person name="Kuroda M.I."/>
        </authorList>
    </citation>
    <scope>IDENTIFICATION IN THE MSL COMPLEX</scope>
</reference>
<reference key="11">
    <citation type="journal article" date="2000" name="Nature">
        <title>Chromodomains are protein-RNA interaction modules.</title>
        <authorList>
            <person name="Akhtar A."/>
            <person name="Zink D."/>
            <person name="Becker P.B."/>
        </authorList>
    </citation>
    <scope>IDENTIFICATION IN THE MSL COMPLEX</scope>
</reference>
<reference key="12">
    <citation type="journal article" date="2006" name="Mol. Cell">
        <title>Nuclear pore components are involved in the transcriptional regulation of dosage compensation in Drosophila.</title>
        <authorList>
            <person name="Mendjan S."/>
            <person name="Taipale M."/>
            <person name="Kind J."/>
            <person name="Holz H."/>
            <person name="Gebhardt P."/>
            <person name="Schelder M."/>
            <person name="Vermeulen M."/>
            <person name="Buscaino A."/>
            <person name="Duncan K."/>
            <person name="Mueller J."/>
            <person name="Wilm M."/>
            <person name="Stunnenberg H.G."/>
            <person name="Saumweber H."/>
            <person name="Akhtar A."/>
        </authorList>
    </citation>
    <scope>FUNCTION</scope>
    <scope>IDENTIFICATION IN THE MSL COMPLEX</scope>
</reference>
<reference key="13">
    <citation type="journal article" date="2008" name="Cell">
        <title>A sequence motif within chromatin entry sites directs MSL establishment on the Drosophila X chromosome.</title>
        <authorList>
            <person name="Alekseyenko A.A."/>
            <person name="Peng S."/>
            <person name="Larschan E."/>
            <person name="Gorchakov A.A."/>
            <person name="Lee O.K."/>
            <person name="Kharchenko P."/>
            <person name="McGrath S.D."/>
            <person name="Wang C.I."/>
            <person name="Mardis E.R."/>
            <person name="Park P.J."/>
            <person name="Kuroda M.I."/>
        </authorList>
    </citation>
    <scope>FUNCTION</scope>
</reference>
<reference key="14">
    <citation type="journal article" date="2008" name="Mol. Cell. Biol.">
        <title>Incorporation of the noncoding roX RNAs alters the chromatin-binding specificity of the Drosophila MSL1/MSL2 complex.</title>
        <authorList>
            <person name="Li F."/>
            <person name="Schiemann A.H."/>
            <person name="Scott M.J."/>
        </authorList>
    </citation>
    <scope>IDENTIFICATION IN THE MSL COMPLEX</scope>
    <scope>DOMAIN</scope>
</reference>
<reference key="15">
    <citation type="journal article" date="2010" name="Nucleic Acids Res.">
        <title>The DNA binding CXC domain of MSL2 is required for faithful targeting the Dosage Compensation Complex to the X chromosome.</title>
        <authorList>
            <person name="Fauth T."/>
            <person name="Mueller-Planitz F."/>
            <person name="Koenig C."/>
            <person name="Straub T."/>
            <person name="Becker P.B."/>
        </authorList>
    </citation>
    <scope>FUNCTION</scope>
</reference>
<reference key="16">
    <citation type="journal article" date="2011" name="Mol. Cell">
        <title>The RING finger protein MSL2 in the MOF complex is an E3 ubiquitin ligase for H2B K34 and is involved in crosstalk with H3 K4 and K79 methylation.</title>
        <authorList>
            <person name="Wu L."/>
            <person name="Zee B.M."/>
            <person name="Wang Y."/>
            <person name="Garcia B.A."/>
            <person name="Dou Y."/>
        </authorList>
    </citation>
    <scope>FUNCTION AS E3 UBIQUITIN LIGASE</scope>
    <scope>CATALYTIC ACTIVITY</scope>
</reference>
<reference key="17">
    <citation type="journal article" date="2011" name="Nucleic Acids Res.">
        <title>msl2 mRNA is bound by free nuclear MSL complex in Drosophila melanogaster.</title>
        <authorList>
            <person name="Johansson A.M."/>
            <person name="Allgardsson A."/>
            <person name="Stenberg P."/>
            <person name="Larsson J."/>
        </authorList>
    </citation>
    <scope>SUBCELLULAR LOCATION</scope>
    <scope>IDENTIFICATION IN THE MSL COMPLEX</scope>
</reference>
<reference key="18">
    <citation type="journal article" date="2012" name="Mol. Cell">
        <title>MSL2 combines sensor and effector functions in homeostatic control of the Drosophila dosage compensation machinery.</title>
        <authorList>
            <person name="Villa R."/>
            <person name="Forne I."/>
            <person name="Mueller M."/>
            <person name="Imhof A."/>
            <person name="Straub T."/>
            <person name="Becker P.B."/>
        </authorList>
    </citation>
    <scope>FUNCTION</scope>
    <scope>CATALYTIC ACTIVITY</scope>
    <scope>PATHWAY</scope>
    <scope>SUBCELLULAR LOCATION</scope>
    <scope>UBIQUITINATION</scope>
    <scope>MUTAGENESIS OF VAL-43; CYS-45; CYS-59; HIS-61; CYS-78; GLU-82; GLY-83 AND SER-85</scope>
</reference>
<reference key="19">
    <citation type="journal article" date="2012" name="Mol. Cell">
        <title>Msl1-mediated dimerization of the dosage compensation complex is essential for male X-chromosome regulation in Drosophila.</title>
        <authorList>
            <person name="Hallacli E."/>
            <person name="Lipp M."/>
            <person name="Georgiev P."/>
            <person name="Spielman C."/>
            <person name="Cusack S."/>
            <person name="Akhtar A."/>
            <person name="Kadlec J."/>
        </authorList>
    </citation>
    <scope>FUNCTION</scope>
    <scope>IDENTIFICATION IN THE MSL COMPLEX</scope>
</reference>
<reference key="20">
    <citation type="journal article" date="2013" name="Mol. Cell">
        <title>Tandem stem-loops in roX RNAs act together to mediate X chromosome dosage compensation in Drosophila.</title>
        <authorList>
            <person name="Ilik I.A."/>
            <person name="Quinn J.J."/>
            <person name="Georgiev P."/>
            <person name="Tavares-Cadete F."/>
            <person name="Maticzka D."/>
            <person name="Toscano S."/>
            <person name="Wan Y."/>
            <person name="Spitale R.C."/>
            <person name="Luscombe N."/>
            <person name="Backofen R."/>
            <person name="Chang H.Y."/>
            <person name="Akhtar A."/>
        </authorList>
    </citation>
    <scope>FUNCTION</scope>
    <scope>IDENTIFICATION IN THE MSL COMPLEX</scope>
</reference>
<reference key="21">
    <citation type="journal article" date="2016" name="Nature">
        <title>PionX sites mark the X chromosome for dosage compensation.</title>
        <authorList>
            <person name="Villa R."/>
            <person name="Schauer T."/>
            <person name="Smialowski P."/>
            <person name="Straub T."/>
            <person name="Becker P.B."/>
        </authorList>
    </citation>
    <scope>FUNCTION</scope>
    <scope>SUBCELLULAR LOCATION</scope>
    <scope>DOMAIN</scope>
    <scope>MUTAGENESIS OF ARG-526 AND ARG-543</scope>
</reference>
<reference key="22">
    <citation type="journal article" date="2017" name="PLoS ONE">
        <title>Ubiquitylation of the acetyltransferase MOF in Drosophila melanogaster.</title>
        <authorList>
            <person name="Schunter S."/>
            <person name="Villa R."/>
            <person name="Flynn V."/>
            <person name="Heidelberger J.B."/>
            <person name="Classen A.K."/>
            <person name="Beli P."/>
            <person name="Becker P.B."/>
        </authorList>
    </citation>
    <scope>FUNCTION</scope>
    <scope>CATALYTIC ACTIVITY</scope>
    <scope>PATHWAY</scope>
</reference>
<reference key="23">
    <citation type="journal article" date="2019" name="Development">
        <title>The simultaneous interaction of MSL2 with CLAMP and DNA provides redundancy in the initiation of dosage compensation in Drosophila males.</title>
        <authorList>
            <person name="Tikhonova E."/>
            <person name="Fedotova A."/>
            <person name="Bonchuk A."/>
            <person name="Mogila V."/>
            <person name="Larschan E.N."/>
            <person name="Georgiev P."/>
            <person name="Maksimenko O."/>
        </authorList>
    </citation>
    <scope>FUNCTION</scope>
    <scope>INTERACTION WITH CLAMP</scope>
    <scope>MUTAGENESIS OF ARG-543</scope>
</reference>
<reference key="24">
    <citation type="journal article" date="2021" name="Nature">
        <title>RNA nucleation by MSL2 induces selective X chromosome compartmentalization.</title>
        <authorList>
            <person name="Valsecchi C.I.K."/>
            <person name="Basilicata M.F."/>
            <person name="Georgiev P."/>
            <person name="Gaub A."/>
            <person name="Seyfferth J."/>
            <person name="Kulkarni T."/>
            <person name="Panhale A."/>
            <person name="Semplicio G."/>
            <person name="Manjunath V."/>
            <person name="Holz H."/>
            <person name="Dasmeh P."/>
            <person name="Akhtar A."/>
        </authorList>
    </citation>
    <scope>FUNCTION</scope>
    <scope>DOMAIN</scope>
</reference>
<reference key="25">
    <citation type="journal article" date="2022" name="Nucleic Acids Res.">
        <title>Structural basis for interaction between CLAMP and MSL2 proteins involved in the specific recruitment of the dosage compensation complex in Drosophila.</title>
        <authorList>
            <person name="Tikhonova E."/>
            <person name="Mariasina S."/>
            <person name="Efimov S."/>
            <person name="Polshakov V."/>
            <person name="Maksimenko O."/>
            <person name="Georgiev P."/>
            <person name="Bonchuk A."/>
        </authorList>
    </citation>
    <scope>INTERACTION WITH CLAMP</scope>
    <scope>MUTAGENESIS OF HIS-631; LEU-633; VAL-634; GLU-639 AND TYR-643</scope>
</reference>
<reference key="26">
    <citation type="journal article" date="2023" name="Nucleic Acids Res.">
        <title>Physical interaction between MSL2 and CLAMP assures direct cooperativity and prevents competition at composite binding sites.</title>
        <authorList>
            <person name="Eggers N."/>
            <person name="Gkountromichos F."/>
            <person name="Krause S."/>
            <person name="Campos-Sparr A."/>
            <person name="Becker P.B."/>
        </authorList>
    </citation>
    <scope>FUNCTION</scope>
    <scope>INTERACTION WITH CLAMP</scope>
</reference>
<reference evidence="36" key="27">
    <citation type="journal article" date="2012" name="PLoS ONE">
        <title>Solution structure of MSL2 CXC domain reveals an unusual Zn3Cys9 cluster and similarity to pre-SET domains of histone lysine methyltransferases.</title>
        <authorList>
            <person name="Zheng S."/>
            <person name="Wang J."/>
            <person name="Feng Y."/>
            <person name="Wang J."/>
            <person name="Ye K."/>
        </authorList>
    </citation>
    <scope>STRUCTURE BY NMR OF 520-570</scope>
    <scope>ZINC-BINDING</scope>
</reference>
<reference evidence="37 38" key="28">
    <citation type="journal article" date="2014" name="Genes Dev.">
        <title>Structural basis of X chromosome DNA recognition by the MSL2 CXC domain during Drosophila dosage compensation.</title>
        <authorList>
            <person name="Zheng S."/>
            <person name="Villa R."/>
            <person name="Wang J."/>
            <person name="Feng Y."/>
            <person name="Wang J."/>
            <person name="Becker P.B."/>
            <person name="Ye K."/>
        </authorList>
    </citation>
    <scope>X-RAY CRYSTALLOGRAPHY (2.00 ANGSTROMS) OF 520-570 IN COMPLEX WITH ZINC</scope>
    <scope>FUNCTION</scope>
    <scope>ZINC-BINDING</scope>
    <scope>MUTAGENESIS OF ARG-526; ASN-534; THR-537 AND ARG-543</scope>
</reference>
<name>MSL2_DROME</name>
<gene>
    <name evidence="33 35" type="primary">msl-2</name>
    <name evidence="35" type="ORF">CG3241</name>
</gene>
<protein>
    <recommendedName>
        <fullName evidence="34">E3 ubiquitin-protein ligase msl-2</fullName>
        <ecNumber evidence="14 16">2.3.2.27</ecNumber>
    </recommendedName>
    <alternativeName>
        <fullName evidence="33">Protein male-specific lethal-2</fullName>
    </alternativeName>
</protein>
<keyword id="KW-0002">3D-structure</keyword>
<keyword id="KW-0158">Chromosome</keyword>
<keyword id="KW-0175">Coiled coil</keyword>
<keyword id="KW-0238">DNA-binding</keyword>
<keyword id="KW-0479">Metal-binding</keyword>
<keyword id="KW-0539">Nucleus</keyword>
<keyword id="KW-1185">Reference proteome</keyword>
<keyword id="KW-0694">RNA-binding</keyword>
<keyword id="KW-0808">Transferase</keyword>
<keyword id="KW-0832">Ubl conjugation</keyword>
<keyword id="KW-0833">Ubl conjugation pathway</keyword>
<keyword id="KW-0862">Zinc</keyword>
<keyword id="KW-0863">Zinc-finger</keyword>
<feature type="chain" id="PRO_0000055962" description="E3 ubiquitin-protein ligase msl-2">
    <location>
        <begin position="1"/>
        <end position="773"/>
    </location>
</feature>
<feature type="domain" description="CXC MSL2-type" evidence="4">
    <location>
        <begin position="520"/>
        <end position="571"/>
    </location>
</feature>
<feature type="zinc finger region" description="RING-type" evidence="3">
    <location>
        <begin position="41"/>
        <end position="85"/>
    </location>
</feature>
<feature type="region of interest" description="Disordered" evidence="5">
    <location>
        <begin position="460"/>
        <end position="525"/>
    </location>
</feature>
<feature type="region of interest" description="C-terminal disordered region (CTD)" evidence="23">
    <location>
        <begin position="571"/>
        <end position="773"/>
    </location>
</feature>
<feature type="region of interest" description="Disordered" evidence="5">
    <location>
        <begin position="572"/>
        <end position="616"/>
    </location>
</feature>
<feature type="region of interest" description="Clamp-binding domain (CBD)" evidence="32">
    <location>
        <begin position="620"/>
        <end position="685"/>
    </location>
</feature>
<feature type="region of interest" description="Pro/Bas region" evidence="31">
    <location>
        <begin position="650"/>
        <end position="708"/>
    </location>
</feature>
<feature type="region of interest" description="Disordered" evidence="5">
    <location>
        <begin position="687"/>
        <end position="773"/>
    </location>
</feature>
<feature type="coiled-coil region" evidence="2">
    <location>
        <begin position="424"/>
        <end position="468"/>
    </location>
</feature>
<feature type="compositionally biased region" description="Acidic residues" evidence="5">
    <location>
        <begin position="572"/>
        <end position="581"/>
    </location>
</feature>
<feature type="compositionally biased region" description="Pro residues" evidence="5">
    <location>
        <begin position="687"/>
        <end position="704"/>
    </location>
</feature>
<feature type="compositionally biased region" description="Basic and acidic residues" evidence="5">
    <location>
        <begin position="705"/>
        <end position="714"/>
    </location>
</feature>
<feature type="compositionally biased region" description="Basic residues" evidence="5">
    <location>
        <begin position="715"/>
        <end position="726"/>
    </location>
</feature>
<feature type="compositionally biased region" description="Polar residues" evidence="5">
    <location>
        <begin position="742"/>
        <end position="759"/>
    </location>
</feature>
<feature type="binding site" evidence="1">
    <location>
        <position position="41"/>
    </location>
    <ligand>
        <name>Zn(2+)</name>
        <dbReference type="ChEBI" id="CHEBI:29105"/>
        <label>1</label>
    </ligand>
</feature>
<feature type="binding site" evidence="1">
    <location>
        <position position="44"/>
    </location>
    <ligand>
        <name>Zn(2+)</name>
        <dbReference type="ChEBI" id="CHEBI:29105"/>
        <label>1</label>
    </ligand>
</feature>
<feature type="binding site" evidence="1">
    <location>
        <position position="59"/>
    </location>
    <ligand>
        <name>Zn(2+)</name>
        <dbReference type="ChEBI" id="CHEBI:29105"/>
        <label>2</label>
    </ligand>
</feature>
<feature type="binding site" evidence="1">
    <location>
        <position position="61"/>
    </location>
    <ligand>
        <name>Zn(2+)</name>
        <dbReference type="ChEBI" id="CHEBI:29105"/>
        <label>2</label>
    </ligand>
</feature>
<feature type="binding site" evidence="1">
    <location>
        <position position="64"/>
    </location>
    <ligand>
        <name>Zn(2+)</name>
        <dbReference type="ChEBI" id="CHEBI:29105"/>
        <label>1</label>
    </ligand>
</feature>
<feature type="binding site" evidence="1">
    <location>
        <position position="67"/>
    </location>
    <ligand>
        <name>Zn(2+)</name>
        <dbReference type="ChEBI" id="CHEBI:29105"/>
        <label>1</label>
    </ligand>
</feature>
<feature type="binding site" evidence="1">
    <location>
        <position position="78"/>
    </location>
    <ligand>
        <name>Zn(2+)</name>
        <dbReference type="ChEBI" id="CHEBI:29105"/>
        <label>2</label>
    </ligand>
</feature>
<feature type="binding site" evidence="1">
    <location>
        <position position="84"/>
    </location>
    <ligand>
        <name>Zn(2+)</name>
        <dbReference type="ChEBI" id="CHEBI:29105"/>
        <label>2</label>
    </ligand>
</feature>
<feature type="binding site" evidence="4 15 19 37 38">
    <location>
        <position position="525"/>
    </location>
    <ligand>
        <name>Zn(2+)</name>
        <dbReference type="ChEBI" id="CHEBI:29105"/>
        <label>3</label>
    </ligand>
</feature>
<feature type="binding site" evidence="4 15 19 37 38">
    <location>
        <position position="525"/>
    </location>
    <ligand>
        <name>Zn(2+)</name>
        <dbReference type="ChEBI" id="CHEBI:29105"/>
        <label>4</label>
    </ligand>
</feature>
<feature type="binding site" evidence="4 15 19 37 38">
    <location>
        <position position="527"/>
    </location>
    <ligand>
        <name>Zn(2+)</name>
        <dbReference type="ChEBI" id="CHEBI:29105"/>
        <label>3</label>
    </ligand>
</feature>
<feature type="binding site" evidence="4 15 19 37 38">
    <location>
        <position position="539"/>
    </location>
    <ligand>
        <name>Zn(2+)</name>
        <dbReference type="ChEBI" id="CHEBI:29105"/>
        <label>3</label>
    </ligand>
</feature>
<feature type="binding site" evidence="4 15 19 37 38">
    <location>
        <position position="539"/>
    </location>
    <ligand>
        <name>Zn(2+)</name>
        <dbReference type="ChEBI" id="CHEBI:29105"/>
        <label>5</label>
    </ligand>
</feature>
<feature type="binding site" evidence="4 15 19 37 38">
    <location>
        <position position="544"/>
    </location>
    <ligand>
        <name>Zn(2+)</name>
        <dbReference type="ChEBI" id="CHEBI:29105"/>
        <label>3</label>
    </ligand>
</feature>
<feature type="binding site" evidence="4 15 19 37 38">
    <location>
        <position position="546"/>
    </location>
    <ligand>
        <name>Zn(2+)</name>
        <dbReference type="ChEBI" id="CHEBI:29105"/>
        <label>4</label>
    </ligand>
</feature>
<feature type="binding site" evidence="4 15 19 37 38">
    <location>
        <position position="553"/>
    </location>
    <ligand>
        <name>Zn(2+)</name>
        <dbReference type="ChEBI" id="CHEBI:29105"/>
        <label>4</label>
    </ligand>
</feature>
<feature type="binding site" evidence="4 15 19 37 38">
    <location>
        <position position="553"/>
    </location>
    <ligand>
        <name>Zn(2+)</name>
        <dbReference type="ChEBI" id="CHEBI:29105"/>
        <label>5</label>
    </ligand>
</feature>
<feature type="binding site" evidence="4 15 19 37 38">
    <location>
        <position position="556"/>
    </location>
    <ligand>
        <name>Zn(2+)</name>
        <dbReference type="ChEBI" id="CHEBI:29105"/>
        <label>4</label>
    </ligand>
</feature>
<feature type="binding site" evidence="4 15 19 37 38">
    <location>
        <position position="558"/>
    </location>
    <ligand>
        <name>Zn(2+)</name>
        <dbReference type="ChEBI" id="CHEBI:29105"/>
        <label>5</label>
    </ligand>
</feature>
<feature type="binding site" evidence="4 15 19 37 38">
    <location>
        <position position="561"/>
    </location>
    <ligand>
        <name>Zn(2+)</name>
        <dbReference type="ChEBI" id="CHEBI:29105"/>
        <label>5</label>
    </ligand>
</feature>
<feature type="mutagenesis site" description="No effect." evidence="16">
    <original>V</original>
    <variation>A</variation>
    <location>
        <position position="43"/>
    </location>
</feature>
<feature type="mutagenesis site" description="No effect." evidence="16">
    <original>C</original>
    <variation>A</variation>
    <location>
        <position position="45"/>
    </location>
</feature>
<feature type="mutagenesis site" description="Abolished E3 ubiquitin ligase activity and incorporation in the MSL complex." evidence="16">
    <original>C</original>
    <variation>A</variation>
    <location>
        <position position="59"/>
    </location>
</feature>
<feature type="mutagenesis site" description="Abolished localization to X chromosome and incorporation in the MSL complex without affecting the E3 ubiquitin ligase activity." evidence="16">
    <original>H</original>
    <variation>A</variation>
    <location>
        <position position="61"/>
    </location>
</feature>
<feature type="mutagenesis site" description="Abolished E3 ubiquitin ligase activity and incorporation in the MSL complex." evidence="16">
    <original>C</original>
    <variation>A</variation>
    <location>
        <position position="78"/>
    </location>
</feature>
<feature type="mutagenesis site" description="No effect." evidence="16">
    <original>E</original>
    <variation>A</variation>
    <location>
        <position position="82"/>
    </location>
</feature>
<feature type="mutagenesis site" description="No effect." evidence="16">
    <original>G</original>
    <variation>F</variation>
    <location>
        <position position="83"/>
    </location>
</feature>
<feature type="mutagenesis site" description="No effect." evidence="16">
    <original>S</original>
    <variation>A</variation>
    <location>
        <position position="85"/>
    </location>
</feature>
<feature type="mutagenesis site" description="Reduced DNA-binding. Abolished DNA-binding; when associated with A-543." evidence="19 20">
    <original>R</original>
    <variation>A</variation>
    <location>
        <position position="526"/>
    </location>
</feature>
<feature type="mutagenesis site" description="Reduced DNA-binding." evidence="19">
    <original>N</original>
    <variation>A</variation>
    <location>
        <position position="534"/>
    </location>
</feature>
<feature type="mutagenesis site" description="Reduced DNA-binding." evidence="19">
    <original>T</original>
    <variation>D</variation>
    <location>
        <position position="537"/>
    </location>
</feature>
<feature type="mutagenesis site" description="Abolished DNA-binding. Abolished DNA-binding; when associated with A-526." evidence="19 20 22">
    <original>R</original>
    <variation>A</variation>
    <location>
        <position position="543"/>
    </location>
</feature>
<feature type="mutagenesis site" description="Does not affect interaction with Clamp." evidence="24">
    <original>H</original>
    <variation>R</variation>
    <location>
        <position position="631"/>
    </location>
</feature>
<feature type="mutagenesis site" description="Weakly affects interaction with Clamp." evidence="24">
    <original>L</original>
    <variation>A</variation>
    <location>
        <position position="633"/>
    </location>
</feature>
<feature type="mutagenesis site" description="Weakly affects interaction with Clamp." evidence="24">
    <original>V</original>
    <variation>A</variation>
    <location>
        <position position="634"/>
    </location>
</feature>
<feature type="mutagenesis site" description="Impaired interaction with Clamp." evidence="24">
    <original>E</original>
    <variation>A</variation>
    <location>
        <position position="639"/>
    </location>
</feature>
<feature type="mutagenesis site" description="Impaired interaction with Clamp." evidence="24">
    <original>Y</original>
    <variation>A</variation>
    <location>
        <position position="643"/>
    </location>
</feature>
<feature type="sequence conflict" description="In Ref. 2; CAA88358." evidence="34" ref="2">
    <original>T</original>
    <variation>N</variation>
    <location>
        <position position="280"/>
    </location>
</feature>
<feature type="sequence conflict" description="In Ref. 2; CAA88358." evidence="34" ref="2">
    <location>
        <begin position="367"/>
        <end position="370"/>
    </location>
</feature>
<feature type="sequence conflict" description="In Ref. 1; AAA75573." evidence="34" ref="1">
    <original>VEE</original>
    <variation>LKT</variation>
    <location>
        <begin position="371"/>
        <end position="373"/>
    </location>
</feature>
<feature type="sequence conflict" description="In Ref. 2; CAA88358." evidence="34" ref="2">
    <original>P</original>
    <variation>Q</variation>
    <location>
        <position position="380"/>
    </location>
</feature>
<feature type="sequence conflict" description="In Ref. 2; CAA88358." evidence="34" ref="2">
    <original>TQT</original>
    <variation>IQA</variation>
    <location>
        <begin position="403"/>
        <end position="405"/>
    </location>
</feature>
<feature type="sequence conflict" description="In Ref. 3; CAA61529." evidence="34" ref="3">
    <original>H</original>
    <variation>Q</variation>
    <location>
        <position position="423"/>
    </location>
</feature>
<feature type="sequence conflict" description="In Ref. 2; CAA88358." evidence="34" ref="2">
    <original>Q</original>
    <variation>H</variation>
    <location>
        <position position="429"/>
    </location>
</feature>
<feature type="sequence conflict" description="In Ref. 2; CAA88358 and 3; CAA61529." evidence="34" ref="2 3">
    <original>AES</original>
    <variation>EEP</variation>
    <location>
        <begin position="431"/>
        <end position="433"/>
    </location>
</feature>
<feature type="sequence conflict" description="In Ref. 2; CAA88358." evidence="34" ref="2">
    <original>E</original>
    <variation>V</variation>
    <location>
        <position position="439"/>
    </location>
</feature>
<feature type="sequence conflict" description="In Ref. 2; CAA88358." evidence="34" ref="2">
    <original>A</original>
    <variation>P</variation>
    <location>
        <position position="443"/>
    </location>
</feature>
<feature type="sequence conflict" description="In Ref. 3; CAA61529." evidence="34" ref="3">
    <original>T</original>
    <variation>A</variation>
    <location>
        <position position="471"/>
    </location>
</feature>
<feature type="sequence conflict" description="In Ref. 3; CAA61529." evidence="34" ref="3">
    <original>M</original>
    <variation>L</variation>
    <location>
        <position position="591"/>
    </location>
</feature>
<feature type="sequence conflict" description="In Ref. 2; CAA88358." evidence="34" ref="2">
    <original>E</original>
    <variation>D</variation>
    <location>
        <position position="642"/>
    </location>
</feature>
<feature type="strand" evidence="40">
    <location>
        <begin position="530"/>
        <end position="533"/>
    </location>
</feature>
<feature type="helix" evidence="41">
    <location>
        <begin position="535"/>
        <end position="537"/>
    </location>
</feature>
<feature type="turn" evidence="39">
    <location>
        <begin position="538"/>
        <end position="540"/>
    </location>
</feature>
<feature type="helix" evidence="41">
    <location>
        <begin position="545"/>
        <end position="548"/>
    </location>
</feature>
<proteinExistence type="evidence at protein level"/>
<accession>P50534</accession>
<accession>Q9VQR1</accession>
<evidence type="ECO:0000250" key="1">
    <source>
        <dbReference type="UniProtKB" id="Q9HCI7"/>
    </source>
</evidence>
<evidence type="ECO:0000255" key="2"/>
<evidence type="ECO:0000255" key="3">
    <source>
        <dbReference type="PROSITE-ProRule" id="PRU00175"/>
    </source>
</evidence>
<evidence type="ECO:0000255" key="4">
    <source>
        <dbReference type="PROSITE-ProRule" id="PRU01396"/>
    </source>
</evidence>
<evidence type="ECO:0000256" key="5">
    <source>
        <dbReference type="SAM" id="MobiDB-lite"/>
    </source>
</evidence>
<evidence type="ECO:0000269" key="6">
    <source>
    </source>
</evidence>
<evidence type="ECO:0000269" key="7">
    <source>
    </source>
</evidence>
<evidence type="ECO:0000269" key="8">
    <source>
    </source>
</evidence>
<evidence type="ECO:0000269" key="9">
    <source>
    </source>
</evidence>
<evidence type="ECO:0000269" key="10">
    <source>
    </source>
</evidence>
<evidence type="ECO:0000269" key="11">
    <source>
    </source>
</evidence>
<evidence type="ECO:0000269" key="12">
    <source>
    </source>
</evidence>
<evidence type="ECO:0000269" key="13">
    <source>
    </source>
</evidence>
<evidence type="ECO:0000269" key="14">
    <source>
    </source>
</evidence>
<evidence type="ECO:0000269" key="15">
    <source>
    </source>
</evidence>
<evidence type="ECO:0000269" key="16">
    <source>
    </source>
</evidence>
<evidence type="ECO:0000269" key="17">
    <source>
    </source>
</evidence>
<evidence type="ECO:0000269" key="18">
    <source>
    </source>
</evidence>
<evidence type="ECO:0000269" key="19">
    <source>
    </source>
</evidence>
<evidence type="ECO:0000269" key="20">
    <source>
    </source>
</evidence>
<evidence type="ECO:0000269" key="21">
    <source>
    </source>
</evidence>
<evidence type="ECO:0000269" key="22">
    <source>
    </source>
</evidence>
<evidence type="ECO:0000269" key="23">
    <source>
    </source>
</evidence>
<evidence type="ECO:0000269" key="24">
    <source>
    </source>
</evidence>
<evidence type="ECO:0000269" key="25">
    <source>
    </source>
</evidence>
<evidence type="ECO:0000269" key="26">
    <source>
    </source>
</evidence>
<evidence type="ECO:0000269" key="27">
    <source>
    </source>
</evidence>
<evidence type="ECO:0000269" key="28">
    <source>
    </source>
</evidence>
<evidence type="ECO:0000269" key="29">
    <source>
    </source>
</evidence>
<evidence type="ECO:0000269" key="30">
    <source>
    </source>
</evidence>
<evidence type="ECO:0000303" key="31">
    <source>
    </source>
</evidence>
<evidence type="ECO:0000303" key="32">
    <source>
    </source>
</evidence>
<evidence type="ECO:0000303" key="33">
    <source>
    </source>
</evidence>
<evidence type="ECO:0000305" key="34"/>
<evidence type="ECO:0000312" key="35">
    <source>
        <dbReference type="FlyBase" id="FBgn0005616"/>
    </source>
</evidence>
<evidence type="ECO:0007744" key="36">
    <source>
        <dbReference type="PDB" id="2LUA"/>
    </source>
</evidence>
<evidence type="ECO:0007744" key="37">
    <source>
        <dbReference type="PDB" id="4RKG"/>
    </source>
</evidence>
<evidence type="ECO:0007744" key="38">
    <source>
        <dbReference type="PDB" id="4RKH"/>
    </source>
</evidence>
<evidence type="ECO:0007829" key="39">
    <source>
        <dbReference type="PDB" id="2LUA"/>
    </source>
</evidence>
<evidence type="ECO:0007829" key="40">
    <source>
        <dbReference type="PDB" id="4RKG"/>
    </source>
</evidence>
<evidence type="ECO:0007829" key="41">
    <source>
        <dbReference type="PDB" id="4RKH"/>
    </source>
</evidence>
<sequence>MAQTAYLKVTRIAMRSASNLSKRRVEELNSGLGELRQLLSCVVCCQLLVDPYSPKGKRCQHNVCRLCLRGKKHLFPSCTQCEGCSDFKTYEENRMMAAQLLCYKTLCVHLLHSALFGELAGMRPQVARELVPRIKLPPKTTQEFIREGSNISDTFDIFLPQPDLPFLKDMPTSLPAETPPTSAVTTPELPYDHHLNISDIEAEAAATAEQGHFSPLPLLPTGSRMGMLSHAGQIVIATESSESGFMDQAWTDQVDLSGTVSVSKYTNSGNNFAVSYVMPTSATTKFDPQELQIGQVVQMADSTQLAVLAAVEETVETSTQLTVLSTTVEETVETSTQLEVLTSAEEPNEISDQLANLQVEESDEALVEETVEEAEGTSIPSEVVAEHMEEDQHLDVHTSQSPTQTEMEEAVEEHVATKTQLGHVQTELQDAESLQKDFEDAKAAAEEAKEKEKDLHAISAELQKEDSDEPTLKRKRTRTLKASQAAKIEPVPSEVKTKVQSGKGALRRIRGKDKEEKVKPPKPKCRCGISGSSNTLTTCRNSRCPCYKSYNSCAGCHCVCCKNPHKEDYVESDEDDDLEDFEMPKDVPEPMTQSEEPVVAEPRQEENSMAPPDSSAPISLVPLNNLQQSQHPLVLVQNEKGEYQGFNIFQGSKPLDPVTVGFTIRVQLQHTDGFGSLPQYAYIMPTIDPPNPPAPSLSPPPPPAPDREVIEPPAKKFRTSRTRRGRANFSALDTVDELVSGGSRSNSAAGDRSSATDNAHSLFEEIMSGSDDL</sequence>
<comment type="function">
    <text evidence="9 11 12 14 16 17 18 19 20 21 22 23 25 26 27 28">Limiting component of the male-specific lethal (MSL) histone acetyltransferase complex, a multiprotein complex essential for elevating transcription of the single X chromosome in the male (X chromosome dosage compensation) (PubMed:18724933, PubMed:23084835, PubMed:23870142, PubMed:27580037, PubMed:31320325, PubMed:33208948, PubMed:7588059, PubMed:7781064, PubMed:7796814). The MSL complex specifically associates with the single X chromosome in males and mediates formation of H4K16ac, promoting a two-fold activation of X chromosome (PubMed:16543150). Msl-2 is only produced in males, constituting the limiting component of the MSL complex (PubMed:7781064). Within the MSL complex, msl-2 mediates the selective binding to the X chromosome and recruitment of the MSL complex via two different mechanisms (PubMed:18724933, PubMed:20139418, PubMed:25452275, PubMed:27580037, PubMed:31320325, PubMed:33208948, PubMed:37602401). Recognizes DNA motifs that are enriched on X chromosome, named PionX sites, which are characterized by sequence features and distinct DNA conformation (base roll) (PubMed:18724933, PubMed:25452275, PubMed:27580037, PubMed:31320325, PubMed:37602401). Specific recognition of the X chromosome is also mediated by the formation of a gel-like state: msl-2 undergoes liquid-liquid phase separation upon binding to roX1 and roX2 non-coding RNAs, leading to nucleate the MSL complex on the X chromosome (PubMed:33208948). Msl-2 is also required for translation and/or stability of msl-1 in males (PubMed:7588059, PubMed:7781064, PubMed:7796814). Also acts as an E3 ubiquitin ligase: in complex with msl-1, mediates ubiquitination of histone H2B at 'Lys-34' (H2BK34Ub) (PubMed:21726816). Also catalyzes ubiquitination of msl-1, msl-3 and mof components of the MSL complex (PubMed:23084834, PubMed:28510597).</text>
</comment>
<comment type="catalytic activity">
    <reaction evidence="14 16 21">
        <text>S-ubiquitinyl-[E2 ubiquitin-conjugating enzyme]-L-cysteine + [acceptor protein]-L-lysine = [E2 ubiquitin-conjugating enzyme]-L-cysteine + N(6)-ubiquitinyl-[acceptor protein]-L-lysine.</text>
        <dbReference type="EC" id="2.3.2.27"/>
    </reaction>
</comment>
<comment type="pathway">
    <text evidence="14 16 21">Protein modification; protein ubiquitination.</text>
</comment>
<comment type="subunit">
    <text evidence="7 8 9 10 13 17 18 22 24 25 26 27 28">Component of the male-specific lethal (MSL) histone acetyltransferase complex, composed of mof, mle, msl-1, msl-2 and msl-3 proteins, as well as roX1 and roX2 non-coding RNAs (PubMed:10679323, PubMed:11014199, PubMed:16543150, PubMed:18086881, PubMed:21551218, PubMed:23084835, PubMed:23870142, PubMed:7588059, PubMed:7781064, PubMed:7796814). When not associated with chromatin, the MSL complex associates with msl-2 mRNAs, possibly to regulate the amount of available MSL complex (PubMed:21551218). Interacts with Clamp; promoting cooperative binding to DNA PionX sites and recruitment of the MSL complex to chromatin (PubMed:31320325, PubMed:35648444, PubMed:37602401).</text>
</comment>
<comment type="subcellular location">
    <subcellularLocation>
        <location evidence="13 27">Nucleus</location>
    </subcellularLocation>
    <subcellularLocation>
        <location evidence="16 20 27">Chromosome</location>
    </subcellularLocation>
    <text evidence="16 27">Msl-2 specifically localizes to many sites on the male X chromosome.</text>
</comment>
<comment type="developmental stage">
    <text evidence="27">Only produced in males.</text>
</comment>
<comment type="induction">
    <text evidence="6 29 30">Msl-2 protein is only present in males: production is prevented by Sxl protein in females, which controls splicing and prevents translation of msl-2 transcripts.</text>
</comment>
<comment type="domain">
    <text evidence="10 23">The C-terminal disordered region (CTD) undergoes liquid-liquid phase separation (LLPS) upon roX (roX1 and roX2) non-coding RNAs to form a stably condensed state, leading to nucleate the MSL complex on the X chromosome (PubMed:33208948). The C-terminal disordered region (CTD) forms phase-separated droplets with either roX2 or, less efficiently, with roX1 non-coding RNAs (PubMed:18086881, PubMed:33208948).</text>
</comment>
<comment type="domain">
    <text evidence="20">The MSL2-type CXC domain and the Pro/Bas region recognize and bind specific DNA motifs on the X-chromosome.</text>
</comment>
<comment type="PTM">
    <text evidence="16">Autoubiquitinated.</text>
</comment>
<comment type="similarity">
    <text evidence="34">Belongs to the MSL2 family.</text>
</comment>